<keyword id="KW-1185">Reference proteome</keyword>
<keyword id="KW-0687">Ribonucleoprotein</keyword>
<keyword id="KW-0689">Ribosomal protein</keyword>
<keyword id="KW-0694">RNA-binding</keyword>
<keyword id="KW-0699">rRNA-binding</keyword>
<feature type="chain" id="PRO_0000129766" description="Small ribosomal subunit protein uS19">
    <location>
        <begin position="1"/>
        <end position="92"/>
    </location>
</feature>
<reference key="1">
    <citation type="journal article" date="2001" name="DNA Res.">
        <title>Complete genomic sequence of the filamentous nitrogen-fixing cyanobacterium Anabaena sp. strain PCC 7120.</title>
        <authorList>
            <person name="Kaneko T."/>
            <person name="Nakamura Y."/>
            <person name="Wolk C.P."/>
            <person name="Kuritz T."/>
            <person name="Sasamoto S."/>
            <person name="Watanabe A."/>
            <person name="Iriguchi M."/>
            <person name="Ishikawa A."/>
            <person name="Kawashima K."/>
            <person name="Kimura T."/>
            <person name="Kishida Y."/>
            <person name="Kohara M."/>
            <person name="Matsumoto M."/>
            <person name="Matsuno A."/>
            <person name="Muraki A."/>
            <person name="Nakazaki N."/>
            <person name="Shimpo S."/>
            <person name="Sugimoto M."/>
            <person name="Takazawa M."/>
            <person name="Yamada M."/>
            <person name="Yasuda M."/>
            <person name="Tabata S."/>
        </authorList>
    </citation>
    <scope>NUCLEOTIDE SEQUENCE [LARGE SCALE GENOMIC DNA]</scope>
    <source>
        <strain>PCC 7120 / SAG 25.82 / UTEX 2576</strain>
    </source>
</reference>
<protein>
    <recommendedName>
        <fullName evidence="1">Small ribosomal subunit protein uS19</fullName>
    </recommendedName>
    <alternativeName>
        <fullName evidence="2">30S ribosomal protein S19</fullName>
    </alternativeName>
</protein>
<gene>
    <name evidence="1" type="primary">rpsS</name>
    <name evidence="1" type="synonym">rps19</name>
    <name type="ordered locus">asl4211</name>
</gene>
<dbReference type="EMBL" id="BA000019">
    <property type="protein sequence ID" value="BAB75910.1"/>
    <property type="molecule type" value="Genomic_DNA"/>
</dbReference>
<dbReference type="PIR" id="AD2332">
    <property type="entry name" value="AD2332"/>
</dbReference>
<dbReference type="RefSeq" id="WP_010998349.1">
    <property type="nucleotide sequence ID" value="NZ_RSCN01000010.1"/>
</dbReference>
<dbReference type="SMR" id="Q8YPI3"/>
<dbReference type="STRING" id="103690.gene:10496260"/>
<dbReference type="KEGG" id="ana:asl4211"/>
<dbReference type="eggNOG" id="COG0185">
    <property type="taxonomic scope" value="Bacteria"/>
</dbReference>
<dbReference type="OrthoDB" id="9797833at2"/>
<dbReference type="Proteomes" id="UP000002483">
    <property type="component" value="Chromosome"/>
</dbReference>
<dbReference type="GO" id="GO:0005737">
    <property type="term" value="C:cytoplasm"/>
    <property type="evidence" value="ECO:0007669"/>
    <property type="project" value="UniProtKB-ARBA"/>
</dbReference>
<dbReference type="GO" id="GO:0015935">
    <property type="term" value="C:small ribosomal subunit"/>
    <property type="evidence" value="ECO:0007669"/>
    <property type="project" value="InterPro"/>
</dbReference>
<dbReference type="GO" id="GO:0019843">
    <property type="term" value="F:rRNA binding"/>
    <property type="evidence" value="ECO:0007669"/>
    <property type="project" value="UniProtKB-UniRule"/>
</dbReference>
<dbReference type="GO" id="GO:0003735">
    <property type="term" value="F:structural constituent of ribosome"/>
    <property type="evidence" value="ECO:0007669"/>
    <property type="project" value="InterPro"/>
</dbReference>
<dbReference type="GO" id="GO:0000028">
    <property type="term" value="P:ribosomal small subunit assembly"/>
    <property type="evidence" value="ECO:0007669"/>
    <property type="project" value="TreeGrafter"/>
</dbReference>
<dbReference type="GO" id="GO:0006412">
    <property type="term" value="P:translation"/>
    <property type="evidence" value="ECO:0007669"/>
    <property type="project" value="UniProtKB-UniRule"/>
</dbReference>
<dbReference type="FunFam" id="3.30.860.10:FF:000001">
    <property type="entry name" value="30S ribosomal protein S19"/>
    <property type="match status" value="1"/>
</dbReference>
<dbReference type="Gene3D" id="3.30.860.10">
    <property type="entry name" value="30s Ribosomal Protein S19, Chain A"/>
    <property type="match status" value="1"/>
</dbReference>
<dbReference type="HAMAP" id="MF_00531">
    <property type="entry name" value="Ribosomal_uS19"/>
    <property type="match status" value="1"/>
</dbReference>
<dbReference type="InterPro" id="IPR002222">
    <property type="entry name" value="Ribosomal_uS19"/>
</dbReference>
<dbReference type="InterPro" id="IPR005732">
    <property type="entry name" value="Ribosomal_uS19_bac-type"/>
</dbReference>
<dbReference type="InterPro" id="IPR020934">
    <property type="entry name" value="Ribosomal_uS19_CS"/>
</dbReference>
<dbReference type="InterPro" id="IPR023575">
    <property type="entry name" value="Ribosomal_uS19_SF"/>
</dbReference>
<dbReference type="NCBIfam" id="TIGR01050">
    <property type="entry name" value="rpsS_bact"/>
    <property type="match status" value="1"/>
</dbReference>
<dbReference type="PANTHER" id="PTHR11880">
    <property type="entry name" value="RIBOSOMAL PROTEIN S19P FAMILY MEMBER"/>
    <property type="match status" value="1"/>
</dbReference>
<dbReference type="PANTHER" id="PTHR11880:SF8">
    <property type="entry name" value="SMALL RIBOSOMAL SUBUNIT PROTEIN US19M"/>
    <property type="match status" value="1"/>
</dbReference>
<dbReference type="Pfam" id="PF00203">
    <property type="entry name" value="Ribosomal_S19"/>
    <property type="match status" value="1"/>
</dbReference>
<dbReference type="PIRSF" id="PIRSF002144">
    <property type="entry name" value="Ribosomal_S19"/>
    <property type="match status" value="1"/>
</dbReference>
<dbReference type="PRINTS" id="PR00975">
    <property type="entry name" value="RIBOSOMALS19"/>
</dbReference>
<dbReference type="SUPFAM" id="SSF54570">
    <property type="entry name" value="Ribosomal protein S19"/>
    <property type="match status" value="1"/>
</dbReference>
<dbReference type="PROSITE" id="PS00323">
    <property type="entry name" value="RIBOSOMAL_S19"/>
    <property type="match status" value="1"/>
</dbReference>
<sequence length="92" mass="10340">MGRSLKKGPFIADHLLSKIEKLNDRNEKQVIKTWSRASTILPLMVGHTIAVHNGRQHVPVFISEQMVGHKLGEFAPTRTYRGHGKSDKKAGR</sequence>
<proteinExistence type="inferred from homology"/>
<comment type="function">
    <text evidence="1">Protein S19 forms a complex with S13 that binds strongly to the 16S ribosomal RNA.</text>
</comment>
<comment type="similarity">
    <text evidence="1">Belongs to the universal ribosomal protein uS19 family.</text>
</comment>
<organism>
    <name type="scientific">Nostoc sp. (strain PCC 7120 / SAG 25.82 / UTEX 2576)</name>
    <dbReference type="NCBI Taxonomy" id="103690"/>
    <lineage>
        <taxon>Bacteria</taxon>
        <taxon>Bacillati</taxon>
        <taxon>Cyanobacteriota</taxon>
        <taxon>Cyanophyceae</taxon>
        <taxon>Nostocales</taxon>
        <taxon>Nostocaceae</taxon>
        <taxon>Nostoc</taxon>
    </lineage>
</organism>
<accession>Q8YPI3</accession>
<evidence type="ECO:0000255" key="1">
    <source>
        <dbReference type="HAMAP-Rule" id="MF_00531"/>
    </source>
</evidence>
<evidence type="ECO:0000305" key="2"/>
<name>RS19_NOSS1</name>